<accession>P0A6E2</accession>
<accession>P08329</accession>
<gene>
    <name evidence="2" type="primary">aroL</name>
    <name type="ordered locus">c0495</name>
</gene>
<feature type="initiator methionine" description="Removed" evidence="1">
    <location>
        <position position="1"/>
    </location>
</feature>
<feature type="chain" id="PRO_0000192382" description="Shikimate kinase 2">
    <location>
        <begin position="2"/>
        <end position="174"/>
    </location>
</feature>
<feature type="region of interest" description="LID domain">
    <location>
        <begin position="112"/>
        <end position="126"/>
    </location>
</feature>
<feature type="binding site" evidence="2">
    <location>
        <begin position="12"/>
        <end position="17"/>
    </location>
    <ligand>
        <name>ATP</name>
        <dbReference type="ChEBI" id="CHEBI:30616"/>
    </ligand>
</feature>
<feature type="binding site" evidence="2">
    <location>
        <position position="16"/>
    </location>
    <ligand>
        <name>Mg(2+)</name>
        <dbReference type="ChEBI" id="CHEBI:18420"/>
    </ligand>
</feature>
<feature type="binding site" evidence="2">
    <location>
        <position position="32"/>
    </location>
    <ligand>
        <name>Mg(2+)</name>
        <dbReference type="ChEBI" id="CHEBI:18420"/>
    </ligand>
</feature>
<feature type="binding site" evidence="2">
    <location>
        <position position="34"/>
    </location>
    <ligand>
        <name>substrate</name>
    </ligand>
</feature>
<feature type="binding site" evidence="2">
    <location>
        <position position="58"/>
    </location>
    <ligand>
        <name>substrate</name>
    </ligand>
</feature>
<feature type="binding site" evidence="2">
    <location>
        <position position="79"/>
    </location>
    <ligand>
        <name>substrate</name>
    </ligand>
</feature>
<feature type="binding site" evidence="2">
    <location>
        <position position="120"/>
    </location>
    <ligand>
        <name>ATP</name>
        <dbReference type="ChEBI" id="CHEBI:30616"/>
    </ligand>
</feature>
<feature type="binding site" evidence="2">
    <location>
        <position position="139"/>
    </location>
    <ligand>
        <name>substrate</name>
    </ligand>
</feature>
<comment type="function">
    <text evidence="2">Catalyzes the specific phosphorylation of the 3-hydroxyl group of shikimic acid using ATP as a cosubstrate.</text>
</comment>
<comment type="catalytic activity">
    <reaction evidence="2">
        <text>shikimate + ATP = 3-phosphoshikimate + ADP + H(+)</text>
        <dbReference type="Rhea" id="RHEA:13121"/>
        <dbReference type="ChEBI" id="CHEBI:15378"/>
        <dbReference type="ChEBI" id="CHEBI:30616"/>
        <dbReference type="ChEBI" id="CHEBI:36208"/>
        <dbReference type="ChEBI" id="CHEBI:145989"/>
        <dbReference type="ChEBI" id="CHEBI:456216"/>
        <dbReference type="EC" id="2.7.1.71"/>
    </reaction>
</comment>
<comment type="cofactor">
    <cofactor evidence="2">
        <name>Mg(2+)</name>
        <dbReference type="ChEBI" id="CHEBI:18420"/>
    </cofactor>
    <text evidence="2">Binds 1 Mg(2+) ion per subunit.</text>
</comment>
<comment type="pathway">
    <text evidence="2">Metabolic intermediate biosynthesis; chorismate biosynthesis; chorismate from D-erythrose 4-phosphate and phosphoenolpyruvate: step 5/7.</text>
</comment>
<comment type="subunit">
    <text evidence="2">Monomer.</text>
</comment>
<comment type="subcellular location">
    <subcellularLocation>
        <location evidence="2">Cytoplasm</location>
    </subcellularLocation>
</comment>
<comment type="domain">
    <text evidence="2">The LID domain closes over the active site upon ATP binding.</text>
</comment>
<comment type="similarity">
    <text evidence="2">Belongs to the shikimate kinase family. AroL subfamily.</text>
</comment>
<sequence>MTQPLFLIGPRGCGKTTVGMALADSLNRRFVDTDQWLQSQLNMTVAEIVEREEWAGFRARETAALEAVTAPSTVIATGGGIILTEFNRHFMQNNGIVVYLCAPVSVLVNRLQAAPEEDLRPTLTGKPLSEEVQEVLEERDALYREVAHIIIDATNEPSQVISEIRSALAQTINC</sequence>
<keyword id="KW-0028">Amino-acid biosynthesis</keyword>
<keyword id="KW-0057">Aromatic amino acid biosynthesis</keyword>
<keyword id="KW-0067">ATP-binding</keyword>
<keyword id="KW-0963">Cytoplasm</keyword>
<keyword id="KW-0418">Kinase</keyword>
<keyword id="KW-0460">Magnesium</keyword>
<keyword id="KW-0479">Metal-binding</keyword>
<keyword id="KW-0547">Nucleotide-binding</keyword>
<keyword id="KW-1185">Reference proteome</keyword>
<keyword id="KW-0808">Transferase</keyword>
<evidence type="ECO:0000250" key="1"/>
<evidence type="ECO:0000255" key="2">
    <source>
        <dbReference type="HAMAP-Rule" id="MF_01269"/>
    </source>
</evidence>
<name>AROL_ECOL6</name>
<proteinExistence type="inferred from homology"/>
<dbReference type="EC" id="2.7.1.71" evidence="2"/>
<dbReference type="EMBL" id="AE014075">
    <property type="protein sequence ID" value="AAN78973.1"/>
    <property type="molecule type" value="Genomic_DNA"/>
</dbReference>
<dbReference type="RefSeq" id="WP_000193393.1">
    <property type="nucleotide sequence ID" value="NZ_CP051263.1"/>
</dbReference>
<dbReference type="SMR" id="P0A6E2"/>
<dbReference type="STRING" id="199310.c0495"/>
<dbReference type="GeneID" id="93777073"/>
<dbReference type="KEGG" id="ecc:c0495"/>
<dbReference type="eggNOG" id="COG0703">
    <property type="taxonomic scope" value="Bacteria"/>
</dbReference>
<dbReference type="HOGENOM" id="CLU_057607_4_3_6"/>
<dbReference type="BioCyc" id="ECOL199310:C0495-MONOMER"/>
<dbReference type="UniPathway" id="UPA00053">
    <property type="reaction ID" value="UER00088"/>
</dbReference>
<dbReference type="Proteomes" id="UP000001410">
    <property type="component" value="Chromosome"/>
</dbReference>
<dbReference type="GO" id="GO:0005829">
    <property type="term" value="C:cytosol"/>
    <property type="evidence" value="ECO:0007669"/>
    <property type="project" value="TreeGrafter"/>
</dbReference>
<dbReference type="GO" id="GO:0005524">
    <property type="term" value="F:ATP binding"/>
    <property type="evidence" value="ECO:0007669"/>
    <property type="project" value="UniProtKB-UniRule"/>
</dbReference>
<dbReference type="GO" id="GO:0000287">
    <property type="term" value="F:magnesium ion binding"/>
    <property type="evidence" value="ECO:0007669"/>
    <property type="project" value="UniProtKB-UniRule"/>
</dbReference>
<dbReference type="GO" id="GO:0004765">
    <property type="term" value="F:shikimate kinase activity"/>
    <property type="evidence" value="ECO:0007669"/>
    <property type="project" value="UniProtKB-UniRule"/>
</dbReference>
<dbReference type="GO" id="GO:0008652">
    <property type="term" value="P:amino acid biosynthetic process"/>
    <property type="evidence" value="ECO:0007669"/>
    <property type="project" value="UniProtKB-KW"/>
</dbReference>
<dbReference type="GO" id="GO:0009073">
    <property type="term" value="P:aromatic amino acid family biosynthetic process"/>
    <property type="evidence" value="ECO:0007669"/>
    <property type="project" value="UniProtKB-KW"/>
</dbReference>
<dbReference type="GO" id="GO:0009423">
    <property type="term" value="P:chorismate biosynthetic process"/>
    <property type="evidence" value="ECO:0007669"/>
    <property type="project" value="UniProtKB-UniRule"/>
</dbReference>
<dbReference type="CDD" id="cd00464">
    <property type="entry name" value="SK"/>
    <property type="match status" value="1"/>
</dbReference>
<dbReference type="FunFam" id="3.40.50.300:FF:000408">
    <property type="entry name" value="Shikimate kinase 2"/>
    <property type="match status" value="1"/>
</dbReference>
<dbReference type="Gene3D" id="3.40.50.300">
    <property type="entry name" value="P-loop containing nucleotide triphosphate hydrolases"/>
    <property type="match status" value="1"/>
</dbReference>
<dbReference type="HAMAP" id="MF_00109">
    <property type="entry name" value="Shikimate_kinase"/>
    <property type="match status" value="1"/>
</dbReference>
<dbReference type="HAMAP" id="MF_01269">
    <property type="entry name" value="Shikimate_kinase_2"/>
    <property type="match status" value="1"/>
</dbReference>
<dbReference type="InterPro" id="IPR027417">
    <property type="entry name" value="P-loop_NTPase"/>
</dbReference>
<dbReference type="InterPro" id="IPR031322">
    <property type="entry name" value="Shikimate/glucono_kinase"/>
</dbReference>
<dbReference type="InterPro" id="IPR000623">
    <property type="entry name" value="Shikimate_kinase/TSH1"/>
</dbReference>
<dbReference type="InterPro" id="IPR027544">
    <property type="entry name" value="Shikimate_kinase_2"/>
</dbReference>
<dbReference type="InterPro" id="IPR023000">
    <property type="entry name" value="Shikimate_kinase_CS"/>
</dbReference>
<dbReference type="NCBIfam" id="NF002988">
    <property type="entry name" value="PRK03731.1"/>
    <property type="match status" value="1"/>
</dbReference>
<dbReference type="PANTHER" id="PTHR21087">
    <property type="entry name" value="SHIKIMATE KINASE"/>
    <property type="match status" value="1"/>
</dbReference>
<dbReference type="PANTHER" id="PTHR21087:SF21">
    <property type="entry name" value="SHIKIMATE KINASE 2"/>
    <property type="match status" value="1"/>
</dbReference>
<dbReference type="Pfam" id="PF01202">
    <property type="entry name" value="SKI"/>
    <property type="match status" value="1"/>
</dbReference>
<dbReference type="PRINTS" id="PR01100">
    <property type="entry name" value="SHIKIMTKNASE"/>
</dbReference>
<dbReference type="SUPFAM" id="SSF52540">
    <property type="entry name" value="P-loop containing nucleoside triphosphate hydrolases"/>
    <property type="match status" value="1"/>
</dbReference>
<dbReference type="PROSITE" id="PS01128">
    <property type="entry name" value="SHIKIMATE_KINASE"/>
    <property type="match status" value="1"/>
</dbReference>
<reference key="1">
    <citation type="journal article" date="2002" name="Proc. Natl. Acad. Sci. U.S.A.">
        <title>Extensive mosaic structure revealed by the complete genome sequence of uropathogenic Escherichia coli.</title>
        <authorList>
            <person name="Welch R.A."/>
            <person name="Burland V."/>
            <person name="Plunkett G. III"/>
            <person name="Redford P."/>
            <person name="Roesch P."/>
            <person name="Rasko D."/>
            <person name="Buckles E.L."/>
            <person name="Liou S.-R."/>
            <person name="Boutin A."/>
            <person name="Hackett J."/>
            <person name="Stroud D."/>
            <person name="Mayhew G.F."/>
            <person name="Rose D.J."/>
            <person name="Zhou S."/>
            <person name="Schwartz D.C."/>
            <person name="Perna N.T."/>
            <person name="Mobley H.L.T."/>
            <person name="Donnenberg M.S."/>
            <person name="Blattner F.R."/>
        </authorList>
    </citation>
    <scope>NUCLEOTIDE SEQUENCE [LARGE SCALE GENOMIC DNA]</scope>
    <source>
        <strain>CFT073 / ATCC 700928 / UPEC</strain>
    </source>
</reference>
<protein>
    <recommendedName>
        <fullName evidence="2">Shikimate kinase 2</fullName>
        <shortName evidence="2">SK 2</shortName>
        <ecNumber evidence="2">2.7.1.71</ecNumber>
    </recommendedName>
</protein>
<organism>
    <name type="scientific">Escherichia coli O6:H1 (strain CFT073 / ATCC 700928 / UPEC)</name>
    <dbReference type="NCBI Taxonomy" id="199310"/>
    <lineage>
        <taxon>Bacteria</taxon>
        <taxon>Pseudomonadati</taxon>
        <taxon>Pseudomonadota</taxon>
        <taxon>Gammaproteobacteria</taxon>
        <taxon>Enterobacterales</taxon>
        <taxon>Enterobacteriaceae</taxon>
        <taxon>Escherichia</taxon>
    </lineage>
</organism>